<evidence type="ECO:0000255" key="1">
    <source>
        <dbReference type="HAMAP-Rule" id="MF_01103"/>
    </source>
</evidence>
<evidence type="ECO:0000256" key="2">
    <source>
        <dbReference type="SAM" id="MobiDB-lite"/>
    </source>
</evidence>
<comment type="subcellular location">
    <subcellularLocation>
        <location evidence="1">Cytoplasm</location>
    </subcellularLocation>
</comment>
<comment type="similarity">
    <text evidence="1">Belongs to the UPF0291 family.</text>
</comment>
<organism>
    <name type="scientific">Anoxybacillus flavithermus (strain DSM 21510 / WK1)</name>
    <dbReference type="NCBI Taxonomy" id="491915"/>
    <lineage>
        <taxon>Bacteria</taxon>
        <taxon>Bacillati</taxon>
        <taxon>Bacillota</taxon>
        <taxon>Bacilli</taxon>
        <taxon>Bacillales</taxon>
        <taxon>Anoxybacillaceae</taxon>
        <taxon>Anoxybacillus</taxon>
    </lineage>
</organism>
<proteinExistence type="inferred from homology"/>
<sequence length="76" mass="8644">MLSSEKIARINELAKKAKIEGLTAEEKQEQIQLRTEYIAAFRASMIETLHAVKVIDPNGNDVTPQKLKDSKKKRLH</sequence>
<keyword id="KW-0963">Cytoplasm</keyword>
<protein>
    <recommendedName>
        <fullName evidence="1">UPF0291 protein Aflv_1503</fullName>
    </recommendedName>
</protein>
<dbReference type="EMBL" id="CP000922">
    <property type="protein sequence ID" value="ACJ33869.1"/>
    <property type="molecule type" value="Genomic_DNA"/>
</dbReference>
<dbReference type="RefSeq" id="WP_012575100.1">
    <property type="nucleotide sequence ID" value="NC_011567.1"/>
</dbReference>
<dbReference type="SMR" id="B7GI87"/>
<dbReference type="STRING" id="491915.Aflv_1503"/>
<dbReference type="GeneID" id="7037758"/>
<dbReference type="KEGG" id="afl:Aflv_1503"/>
<dbReference type="PATRIC" id="fig|491915.6.peg.1546"/>
<dbReference type="eggNOG" id="COG4224">
    <property type="taxonomic scope" value="Bacteria"/>
</dbReference>
<dbReference type="HOGENOM" id="CLU_173137_0_2_9"/>
<dbReference type="Proteomes" id="UP000000742">
    <property type="component" value="Chromosome"/>
</dbReference>
<dbReference type="GO" id="GO:0005737">
    <property type="term" value="C:cytoplasm"/>
    <property type="evidence" value="ECO:0007669"/>
    <property type="project" value="UniProtKB-SubCell"/>
</dbReference>
<dbReference type="Gene3D" id="1.10.287.540">
    <property type="entry name" value="Helix hairpin bin"/>
    <property type="match status" value="1"/>
</dbReference>
<dbReference type="HAMAP" id="MF_01103">
    <property type="entry name" value="UPF0291"/>
    <property type="match status" value="1"/>
</dbReference>
<dbReference type="InterPro" id="IPR009242">
    <property type="entry name" value="DUF896"/>
</dbReference>
<dbReference type="PANTHER" id="PTHR37300">
    <property type="entry name" value="UPF0291 PROTEIN CBO2609/CLC_2481"/>
    <property type="match status" value="1"/>
</dbReference>
<dbReference type="PANTHER" id="PTHR37300:SF1">
    <property type="entry name" value="UPF0291 PROTEIN YNZC"/>
    <property type="match status" value="1"/>
</dbReference>
<dbReference type="Pfam" id="PF05979">
    <property type="entry name" value="DUF896"/>
    <property type="match status" value="1"/>
</dbReference>
<dbReference type="SUPFAM" id="SSF158221">
    <property type="entry name" value="YnzC-like"/>
    <property type="match status" value="1"/>
</dbReference>
<accession>B7GI87</accession>
<name>Y1503_ANOFW</name>
<feature type="chain" id="PRO_1000137008" description="UPF0291 protein Aflv_1503">
    <location>
        <begin position="1"/>
        <end position="76"/>
    </location>
</feature>
<feature type="region of interest" description="Disordered" evidence="2">
    <location>
        <begin position="56"/>
        <end position="76"/>
    </location>
</feature>
<reference key="1">
    <citation type="journal article" date="2008" name="Genome Biol.">
        <title>Encapsulated in silica: genome, proteome and physiology of the thermophilic bacterium Anoxybacillus flavithermus WK1.</title>
        <authorList>
            <person name="Saw J.H."/>
            <person name="Mountain B.W."/>
            <person name="Feng L."/>
            <person name="Omelchenko M.V."/>
            <person name="Hou S."/>
            <person name="Saito J.A."/>
            <person name="Stott M.B."/>
            <person name="Li D."/>
            <person name="Zhao G."/>
            <person name="Wu J."/>
            <person name="Galperin M.Y."/>
            <person name="Koonin E.V."/>
            <person name="Makarova K.S."/>
            <person name="Wolf Y.I."/>
            <person name="Rigden D.J."/>
            <person name="Dunfield P.F."/>
            <person name="Wang L."/>
            <person name="Alam M."/>
        </authorList>
    </citation>
    <scope>NUCLEOTIDE SEQUENCE [LARGE SCALE GENOMIC DNA]</scope>
    <source>
        <strain>DSM 21510 / WK1</strain>
    </source>
</reference>
<gene>
    <name type="ordered locus">Aflv_1503</name>
</gene>